<dbReference type="EMBL" id="GG692398">
    <property type="protein sequence ID" value="EER32847.1"/>
    <property type="molecule type" value="Genomic_DNA"/>
</dbReference>
<dbReference type="RefSeq" id="XP_002548975.1">
    <property type="nucleotide sequence ID" value="XM_002548929.1"/>
</dbReference>
<dbReference type="SMR" id="C5MB30"/>
<dbReference type="STRING" id="294747.C5MB30"/>
<dbReference type="EnsemblFungi" id="CTRG_03272-t43_1">
    <property type="protein sequence ID" value="CTRG_03272-t43_1-p1"/>
    <property type="gene ID" value="CTRG_03272"/>
</dbReference>
<dbReference type="GeneID" id="8295994"/>
<dbReference type="KEGG" id="ctp:CTRG_03272"/>
<dbReference type="VEuPathDB" id="FungiDB:CTRG_03272"/>
<dbReference type="eggNOG" id="ENOG502QW7A">
    <property type="taxonomic scope" value="Eukaryota"/>
</dbReference>
<dbReference type="HOGENOM" id="CLU_043316_0_0_1"/>
<dbReference type="OrthoDB" id="5983572at2759"/>
<dbReference type="Proteomes" id="UP000002037">
    <property type="component" value="Unassembled WGS sequence"/>
</dbReference>
<dbReference type="GO" id="GO:0005886">
    <property type="term" value="C:plasma membrane"/>
    <property type="evidence" value="ECO:0007669"/>
    <property type="project" value="UniProtKB-SubCell"/>
</dbReference>
<dbReference type="GO" id="GO:0030447">
    <property type="term" value="P:filamentous growth"/>
    <property type="evidence" value="ECO:0007669"/>
    <property type="project" value="UniProtKB-ARBA"/>
</dbReference>
<dbReference type="GO" id="GO:0030833">
    <property type="term" value="P:regulation of actin filament polymerization"/>
    <property type="evidence" value="ECO:0007669"/>
    <property type="project" value="TreeGrafter"/>
</dbReference>
<dbReference type="CDD" id="cd11855">
    <property type="entry name" value="SH3_Sho1p"/>
    <property type="match status" value="1"/>
</dbReference>
<dbReference type="FunFam" id="2.30.30.40:FF:000213">
    <property type="entry name" value="High osmolarity signaling protein SHO1"/>
    <property type="match status" value="1"/>
</dbReference>
<dbReference type="Gene3D" id="2.30.30.40">
    <property type="entry name" value="SH3 Domains"/>
    <property type="match status" value="1"/>
</dbReference>
<dbReference type="InterPro" id="IPR036028">
    <property type="entry name" value="SH3-like_dom_sf"/>
</dbReference>
<dbReference type="InterPro" id="IPR001452">
    <property type="entry name" value="SH3_domain"/>
</dbReference>
<dbReference type="InterPro" id="IPR035522">
    <property type="entry name" value="Sho1_SH3"/>
</dbReference>
<dbReference type="PANTHER" id="PTHR15735">
    <property type="entry name" value="FCH AND DOUBLE SH3 DOMAINS PROTEIN"/>
    <property type="match status" value="1"/>
</dbReference>
<dbReference type="PANTHER" id="PTHR15735:SF20">
    <property type="entry name" value="HIGH OSMOLARITY SIGNALING PROTEIN SHO1"/>
    <property type="match status" value="1"/>
</dbReference>
<dbReference type="Pfam" id="PF14604">
    <property type="entry name" value="SH3_9"/>
    <property type="match status" value="1"/>
</dbReference>
<dbReference type="PRINTS" id="PR00452">
    <property type="entry name" value="SH3DOMAIN"/>
</dbReference>
<dbReference type="SMART" id="SM00326">
    <property type="entry name" value="SH3"/>
    <property type="match status" value="1"/>
</dbReference>
<dbReference type="SUPFAM" id="SSF50044">
    <property type="entry name" value="SH3-domain"/>
    <property type="match status" value="1"/>
</dbReference>
<dbReference type="PROSITE" id="PS50002">
    <property type="entry name" value="SH3"/>
    <property type="match status" value="1"/>
</dbReference>
<gene>
    <name type="primary">SHO1</name>
    <name type="ORF">CTRG_03272</name>
</gene>
<comment type="function">
    <text evidence="1">Plasma membrane osmosensor that activates the high osmolarity glycerol (HOG) MAPK signaling pathway in response to high osmolarity.</text>
</comment>
<comment type="subunit">
    <text evidence="1">Forms homooligomers.</text>
</comment>
<comment type="subcellular location">
    <subcellularLocation>
        <location evidence="1">Cell membrane</location>
        <topology evidence="1">Multi-pass membrane protein</topology>
    </subcellularLocation>
</comment>
<comment type="similarity">
    <text evidence="5">Belongs to the SHO1 family.</text>
</comment>
<keyword id="KW-1003">Cell membrane</keyword>
<keyword id="KW-0472">Membrane</keyword>
<keyword id="KW-1185">Reference proteome</keyword>
<keyword id="KW-0728">SH3 domain</keyword>
<keyword id="KW-0346">Stress response</keyword>
<keyword id="KW-0812">Transmembrane</keyword>
<keyword id="KW-1133">Transmembrane helix</keyword>
<proteinExistence type="inferred from homology"/>
<protein>
    <recommendedName>
        <fullName>High osmolarity signaling protein SHO1</fullName>
    </recommendedName>
    <alternativeName>
        <fullName>Osmosensor SHO1</fullName>
    </alternativeName>
</protein>
<feature type="chain" id="PRO_0000410367" description="High osmolarity signaling protein SHO1">
    <location>
        <begin position="1"/>
        <end position="340"/>
    </location>
</feature>
<feature type="topological domain" description="Cytoplasmic" evidence="2">
    <location>
        <begin position="1"/>
        <end position="12"/>
    </location>
</feature>
<feature type="transmembrane region" description="Helical" evidence="2">
    <location>
        <begin position="13"/>
        <end position="33"/>
    </location>
</feature>
<feature type="topological domain" description="Extracellular" evidence="2">
    <location>
        <begin position="34"/>
        <end position="42"/>
    </location>
</feature>
<feature type="transmembrane region" description="Helical" evidence="2">
    <location>
        <begin position="43"/>
        <end position="63"/>
    </location>
</feature>
<feature type="topological domain" description="Cytoplasmic" evidence="2">
    <location>
        <begin position="64"/>
        <end position="65"/>
    </location>
</feature>
<feature type="transmembrane region" description="Helical" evidence="2">
    <location>
        <begin position="66"/>
        <end position="86"/>
    </location>
</feature>
<feature type="topological domain" description="Extracellular" evidence="2">
    <location>
        <begin position="87"/>
        <end position="101"/>
    </location>
</feature>
<feature type="transmembrane region" description="Helical" evidence="2">
    <location>
        <begin position="102"/>
        <end position="122"/>
    </location>
</feature>
<feature type="topological domain" description="Cytoplasmic" evidence="2">
    <location>
        <begin position="123"/>
        <end position="340"/>
    </location>
</feature>
<feature type="domain" description="SH3" evidence="3">
    <location>
        <begin position="279"/>
        <end position="340"/>
    </location>
</feature>
<feature type="region of interest" description="Disordered" evidence="4">
    <location>
        <begin position="192"/>
        <end position="271"/>
    </location>
</feature>
<feature type="compositionally biased region" description="Polar residues" evidence="4">
    <location>
        <begin position="194"/>
        <end position="207"/>
    </location>
</feature>
<feature type="compositionally biased region" description="Polar residues" evidence="4">
    <location>
        <begin position="229"/>
        <end position="246"/>
    </location>
</feature>
<feature type="compositionally biased region" description="Polar residues" evidence="4">
    <location>
        <begin position="255"/>
        <end position="271"/>
    </location>
</feature>
<evidence type="ECO:0000250" key="1"/>
<evidence type="ECO:0000255" key="2"/>
<evidence type="ECO:0000255" key="3">
    <source>
        <dbReference type="PROSITE-ProRule" id="PRU00192"/>
    </source>
</evidence>
<evidence type="ECO:0000256" key="4">
    <source>
        <dbReference type="SAM" id="MobiDB-lite"/>
    </source>
</evidence>
<evidence type="ECO:0000305" key="5"/>
<organism>
    <name type="scientific">Candida tropicalis (strain ATCC MYA-3404 / T1)</name>
    <name type="common">Yeast</name>
    <dbReference type="NCBI Taxonomy" id="294747"/>
    <lineage>
        <taxon>Eukaryota</taxon>
        <taxon>Fungi</taxon>
        <taxon>Dikarya</taxon>
        <taxon>Ascomycota</taxon>
        <taxon>Saccharomycotina</taxon>
        <taxon>Pichiomycetes</taxon>
        <taxon>Debaryomycetaceae</taxon>
        <taxon>Candida/Lodderomyces clade</taxon>
        <taxon>Candida</taxon>
    </lineage>
</organism>
<accession>C5MB30</accession>
<reference key="1">
    <citation type="journal article" date="2009" name="Nature">
        <title>Evolution of pathogenicity and sexual reproduction in eight Candida genomes.</title>
        <authorList>
            <person name="Butler G."/>
            <person name="Rasmussen M.D."/>
            <person name="Lin M.F."/>
            <person name="Santos M.A.S."/>
            <person name="Sakthikumar S."/>
            <person name="Munro C.A."/>
            <person name="Rheinbay E."/>
            <person name="Grabherr M."/>
            <person name="Forche A."/>
            <person name="Reedy J.L."/>
            <person name="Agrafioti I."/>
            <person name="Arnaud M.B."/>
            <person name="Bates S."/>
            <person name="Brown A.J.P."/>
            <person name="Brunke S."/>
            <person name="Costanzo M.C."/>
            <person name="Fitzpatrick D.A."/>
            <person name="de Groot P.W.J."/>
            <person name="Harris D."/>
            <person name="Hoyer L.L."/>
            <person name="Hube B."/>
            <person name="Klis F.M."/>
            <person name="Kodira C."/>
            <person name="Lennard N."/>
            <person name="Logue M.E."/>
            <person name="Martin R."/>
            <person name="Neiman A.M."/>
            <person name="Nikolaou E."/>
            <person name="Quail M.A."/>
            <person name="Quinn J."/>
            <person name="Santos M.C."/>
            <person name="Schmitzberger F.F."/>
            <person name="Sherlock G."/>
            <person name="Shah P."/>
            <person name="Silverstein K.A.T."/>
            <person name="Skrzypek M.S."/>
            <person name="Soll D."/>
            <person name="Staggs R."/>
            <person name="Stansfield I."/>
            <person name="Stumpf M.P.H."/>
            <person name="Sudbery P.E."/>
            <person name="Srikantha T."/>
            <person name="Zeng Q."/>
            <person name="Berman J."/>
            <person name="Berriman M."/>
            <person name="Heitman J."/>
            <person name="Gow N.A.R."/>
            <person name="Lorenz M.C."/>
            <person name="Birren B.W."/>
            <person name="Kellis M."/>
            <person name="Cuomo C.A."/>
        </authorList>
    </citation>
    <scope>NUCLEOTIDE SEQUENCE [LARGE SCALE GENOMIC DNA]</scope>
    <source>
        <strain>ATCC MYA-3404 / T1</strain>
    </source>
</reference>
<sequence length="340" mass="37128">MGFSLSNFTGDPFAITTISFGIISWVVALAGAAASEQSTFPHFSWWGVAYQIVIILIIFVLYANNNIELYKFTLVGLVSIAFIYTTNTTNNLIYNSDSSGNLCCAAGCILLSILNLIWILYFGGHPESPTNQFIDSFSIKNHGHEHLGNTNPVSKSEVQAYDEMGANNQDYRRYVSPAQIPDAPQGPLRLGSHQDISSGNGNTTMQPPNMPGSAVHTPQGNTTNNNNTYMSSSHLAGLENFSSQDVPGSGATGRDLTNNSTSNKRNTIYTDSETGTGITFRYKAKALYSYDANPDDINEISFVKDEILEVDDIDGKWWQARRANGQVGICPSNYVKLLDT</sequence>
<name>SHO1_CANTT</name>